<name>ATPB_SHIDS</name>
<reference key="1">
    <citation type="journal article" date="2005" name="Nucleic Acids Res.">
        <title>Genome dynamics and diversity of Shigella species, the etiologic agents of bacillary dysentery.</title>
        <authorList>
            <person name="Yang F."/>
            <person name="Yang J."/>
            <person name="Zhang X."/>
            <person name="Chen L."/>
            <person name="Jiang Y."/>
            <person name="Yan Y."/>
            <person name="Tang X."/>
            <person name="Wang J."/>
            <person name="Xiong Z."/>
            <person name="Dong J."/>
            <person name="Xue Y."/>
            <person name="Zhu Y."/>
            <person name="Xu X."/>
            <person name="Sun L."/>
            <person name="Chen S."/>
            <person name="Nie H."/>
            <person name="Peng J."/>
            <person name="Xu J."/>
            <person name="Wang Y."/>
            <person name="Yuan Z."/>
            <person name="Wen Y."/>
            <person name="Yao Z."/>
            <person name="Shen Y."/>
            <person name="Qiang B."/>
            <person name="Hou Y."/>
            <person name="Yu J."/>
            <person name="Jin Q."/>
        </authorList>
    </citation>
    <scope>NUCLEOTIDE SEQUENCE [LARGE SCALE GENOMIC DNA]</scope>
    <source>
        <strain>Sd197</strain>
    </source>
</reference>
<gene>
    <name evidence="1" type="primary">atpD</name>
    <name type="ordered locus">SDY_4016</name>
</gene>
<protein>
    <recommendedName>
        <fullName evidence="1">ATP synthase subunit beta</fullName>
        <ecNumber evidence="1">7.1.2.2</ecNumber>
    </recommendedName>
    <alternativeName>
        <fullName evidence="1">ATP synthase F1 sector subunit beta</fullName>
    </alternativeName>
    <alternativeName>
        <fullName evidence="1">F-ATPase subunit beta</fullName>
    </alternativeName>
</protein>
<accession>Q329S1</accession>
<proteinExistence type="inferred from homology"/>
<dbReference type="EC" id="7.1.2.2" evidence="1"/>
<dbReference type="EMBL" id="CP000034">
    <property type="protein sequence ID" value="ABB63934.1"/>
    <property type="molecule type" value="Genomic_DNA"/>
</dbReference>
<dbReference type="RefSeq" id="WP_000190496.1">
    <property type="nucleotide sequence ID" value="NC_007606.1"/>
</dbReference>
<dbReference type="RefSeq" id="YP_405425.1">
    <property type="nucleotide sequence ID" value="NC_007606.1"/>
</dbReference>
<dbReference type="SMR" id="Q329S1"/>
<dbReference type="STRING" id="300267.SDY_4016"/>
<dbReference type="EnsemblBacteria" id="ABB63934">
    <property type="protein sequence ID" value="ABB63934"/>
    <property type="gene ID" value="SDY_4016"/>
</dbReference>
<dbReference type="KEGG" id="sdy:SDY_4016"/>
<dbReference type="PATRIC" id="fig|300267.13.peg.4729"/>
<dbReference type="HOGENOM" id="CLU_022398_0_2_6"/>
<dbReference type="Proteomes" id="UP000002716">
    <property type="component" value="Chromosome"/>
</dbReference>
<dbReference type="GO" id="GO:0005886">
    <property type="term" value="C:plasma membrane"/>
    <property type="evidence" value="ECO:0007669"/>
    <property type="project" value="UniProtKB-SubCell"/>
</dbReference>
<dbReference type="GO" id="GO:0045259">
    <property type="term" value="C:proton-transporting ATP synthase complex"/>
    <property type="evidence" value="ECO:0007669"/>
    <property type="project" value="UniProtKB-KW"/>
</dbReference>
<dbReference type="GO" id="GO:0005524">
    <property type="term" value="F:ATP binding"/>
    <property type="evidence" value="ECO:0007669"/>
    <property type="project" value="UniProtKB-UniRule"/>
</dbReference>
<dbReference type="GO" id="GO:0016887">
    <property type="term" value="F:ATP hydrolysis activity"/>
    <property type="evidence" value="ECO:0007669"/>
    <property type="project" value="InterPro"/>
</dbReference>
<dbReference type="GO" id="GO:0046933">
    <property type="term" value="F:proton-transporting ATP synthase activity, rotational mechanism"/>
    <property type="evidence" value="ECO:0007669"/>
    <property type="project" value="UniProtKB-UniRule"/>
</dbReference>
<dbReference type="CDD" id="cd18110">
    <property type="entry name" value="ATP-synt_F1_beta_C"/>
    <property type="match status" value="1"/>
</dbReference>
<dbReference type="CDD" id="cd18115">
    <property type="entry name" value="ATP-synt_F1_beta_N"/>
    <property type="match status" value="1"/>
</dbReference>
<dbReference type="CDD" id="cd01133">
    <property type="entry name" value="F1-ATPase_beta_CD"/>
    <property type="match status" value="1"/>
</dbReference>
<dbReference type="FunFam" id="1.10.1140.10:FF:000001">
    <property type="entry name" value="ATP synthase subunit beta"/>
    <property type="match status" value="1"/>
</dbReference>
<dbReference type="FunFam" id="2.40.10.170:FF:000003">
    <property type="entry name" value="ATP synthase subunit beta"/>
    <property type="match status" value="1"/>
</dbReference>
<dbReference type="FunFam" id="3.40.50.300:FF:000004">
    <property type="entry name" value="ATP synthase subunit beta"/>
    <property type="match status" value="1"/>
</dbReference>
<dbReference type="Gene3D" id="2.40.10.170">
    <property type="match status" value="1"/>
</dbReference>
<dbReference type="Gene3D" id="1.10.1140.10">
    <property type="entry name" value="Bovine Mitochondrial F1-atpase, Atp Synthase Beta Chain, Chain D, domain 3"/>
    <property type="match status" value="1"/>
</dbReference>
<dbReference type="Gene3D" id="3.40.50.300">
    <property type="entry name" value="P-loop containing nucleotide triphosphate hydrolases"/>
    <property type="match status" value="1"/>
</dbReference>
<dbReference type="HAMAP" id="MF_01347">
    <property type="entry name" value="ATP_synth_beta_bact"/>
    <property type="match status" value="1"/>
</dbReference>
<dbReference type="InterPro" id="IPR003593">
    <property type="entry name" value="AAA+_ATPase"/>
</dbReference>
<dbReference type="InterPro" id="IPR055190">
    <property type="entry name" value="ATP-synt_VA_C"/>
</dbReference>
<dbReference type="InterPro" id="IPR005722">
    <property type="entry name" value="ATP_synth_F1_bsu"/>
</dbReference>
<dbReference type="InterPro" id="IPR020003">
    <property type="entry name" value="ATPase_a/bsu_AS"/>
</dbReference>
<dbReference type="InterPro" id="IPR050053">
    <property type="entry name" value="ATPase_alpha/beta_chains"/>
</dbReference>
<dbReference type="InterPro" id="IPR004100">
    <property type="entry name" value="ATPase_F1/V1/A1_a/bsu_N"/>
</dbReference>
<dbReference type="InterPro" id="IPR036121">
    <property type="entry name" value="ATPase_F1/V1/A1_a/bsu_N_sf"/>
</dbReference>
<dbReference type="InterPro" id="IPR000194">
    <property type="entry name" value="ATPase_F1/V1/A1_a/bsu_nucl-bd"/>
</dbReference>
<dbReference type="InterPro" id="IPR024034">
    <property type="entry name" value="ATPase_F1/V1_b/a_C"/>
</dbReference>
<dbReference type="InterPro" id="IPR027417">
    <property type="entry name" value="P-loop_NTPase"/>
</dbReference>
<dbReference type="NCBIfam" id="TIGR01039">
    <property type="entry name" value="atpD"/>
    <property type="match status" value="1"/>
</dbReference>
<dbReference type="PANTHER" id="PTHR15184">
    <property type="entry name" value="ATP SYNTHASE"/>
    <property type="match status" value="1"/>
</dbReference>
<dbReference type="PANTHER" id="PTHR15184:SF71">
    <property type="entry name" value="ATP SYNTHASE SUBUNIT BETA, MITOCHONDRIAL"/>
    <property type="match status" value="1"/>
</dbReference>
<dbReference type="Pfam" id="PF00006">
    <property type="entry name" value="ATP-synt_ab"/>
    <property type="match status" value="1"/>
</dbReference>
<dbReference type="Pfam" id="PF02874">
    <property type="entry name" value="ATP-synt_ab_N"/>
    <property type="match status" value="1"/>
</dbReference>
<dbReference type="Pfam" id="PF22919">
    <property type="entry name" value="ATP-synt_VA_C"/>
    <property type="match status" value="1"/>
</dbReference>
<dbReference type="SMART" id="SM00382">
    <property type="entry name" value="AAA"/>
    <property type="match status" value="1"/>
</dbReference>
<dbReference type="SUPFAM" id="SSF47917">
    <property type="entry name" value="C-terminal domain of alpha and beta subunits of F1 ATP synthase"/>
    <property type="match status" value="1"/>
</dbReference>
<dbReference type="SUPFAM" id="SSF50615">
    <property type="entry name" value="N-terminal domain of alpha and beta subunits of F1 ATP synthase"/>
    <property type="match status" value="1"/>
</dbReference>
<dbReference type="SUPFAM" id="SSF52540">
    <property type="entry name" value="P-loop containing nucleoside triphosphate hydrolases"/>
    <property type="match status" value="1"/>
</dbReference>
<dbReference type="PROSITE" id="PS00152">
    <property type="entry name" value="ATPASE_ALPHA_BETA"/>
    <property type="match status" value="1"/>
</dbReference>
<comment type="function">
    <text evidence="1">Produces ATP from ADP in the presence of a proton gradient across the membrane. The catalytic sites are hosted primarily by the beta subunits.</text>
</comment>
<comment type="catalytic activity">
    <reaction evidence="1">
        <text>ATP + H2O + 4 H(+)(in) = ADP + phosphate + 5 H(+)(out)</text>
        <dbReference type="Rhea" id="RHEA:57720"/>
        <dbReference type="ChEBI" id="CHEBI:15377"/>
        <dbReference type="ChEBI" id="CHEBI:15378"/>
        <dbReference type="ChEBI" id="CHEBI:30616"/>
        <dbReference type="ChEBI" id="CHEBI:43474"/>
        <dbReference type="ChEBI" id="CHEBI:456216"/>
        <dbReference type="EC" id="7.1.2.2"/>
    </reaction>
</comment>
<comment type="subunit">
    <text evidence="1">F-type ATPases have 2 components, CF(1) - the catalytic core - and CF(0) - the membrane proton channel. CF(1) has five subunits: alpha(3), beta(3), gamma(1), delta(1), epsilon(1). CF(0) has three main subunits: a(1), b(2) and c(9-12). The alpha and beta chains form an alternating ring which encloses part of the gamma chain. CF(1) is attached to CF(0) by a central stalk formed by the gamma and epsilon chains, while a peripheral stalk is formed by the delta and b chains.</text>
</comment>
<comment type="subcellular location">
    <subcellularLocation>
        <location evidence="1">Cell inner membrane</location>
        <topology evidence="1">Peripheral membrane protein</topology>
    </subcellularLocation>
</comment>
<comment type="similarity">
    <text evidence="1">Belongs to the ATPase alpha/beta chains family.</text>
</comment>
<evidence type="ECO:0000255" key="1">
    <source>
        <dbReference type="HAMAP-Rule" id="MF_01347"/>
    </source>
</evidence>
<sequence>MATGKIVQVIGAVVDVEFPQDAVPRVYDALAVQNGNERLVLEVQQQLGGGIVRTIAMGSSDGLRRGLDVKDLEHPIEVPVGKATLGRIMNVLGEPVDMKGEIGEEERWAIHRAAPSYEELSNSQELLETGIKVIDLMCPFAKGGKVGLFGGAGVGKTVNMMELIRNIAIEHSGYSVFAGVGERTREGNDFYHEMTDSNVIDKVSLVYGQMNEPPGNRLRVALTGLTMAEKFRDEGRDVLLFVDNIYRYTLAGTEVSALLGRMPSAVGYQPTLAEEMGVLQERITSTKTGSITSVQAVYVPADDLTDPSPATTFAHLDATVVLSRQIASLGIYPAVDPLDSTSRQLDPLVVGQEHYDTARGVQSILQRYQELKDIIAILGMDELSEEDKLVVARARKIQRFLSQPFFVAEVFTGSPGKYVSLKDTIRGFKGIMEGEYDHLPEQAFYMVGSIEEAVEKAKKL</sequence>
<keyword id="KW-0066">ATP synthesis</keyword>
<keyword id="KW-0067">ATP-binding</keyword>
<keyword id="KW-0997">Cell inner membrane</keyword>
<keyword id="KW-1003">Cell membrane</keyword>
<keyword id="KW-0139">CF(1)</keyword>
<keyword id="KW-0375">Hydrogen ion transport</keyword>
<keyword id="KW-0406">Ion transport</keyword>
<keyword id="KW-0472">Membrane</keyword>
<keyword id="KW-0547">Nucleotide-binding</keyword>
<keyword id="KW-1185">Reference proteome</keyword>
<keyword id="KW-1278">Translocase</keyword>
<keyword id="KW-0813">Transport</keyword>
<feature type="chain" id="PRO_0000254375" description="ATP synthase subunit beta">
    <location>
        <begin position="1"/>
        <end position="460"/>
    </location>
</feature>
<feature type="binding site" evidence="1">
    <location>
        <begin position="150"/>
        <end position="157"/>
    </location>
    <ligand>
        <name>ATP</name>
        <dbReference type="ChEBI" id="CHEBI:30616"/>
    </ligand>
</feature>
<organism>
    <name type="scientific">Shigella dysenteriae serotype 1 (strain Sd197)</name>
    <dbReference type="NCBI Taxonomy" id="300267"/>
    <lineage>
        <taxon>Bacteria</taxon>
        <taxon>Pseudomonadati</taxon>
        <taxon>Pseudomonadota</taxon>
        <taxon>Gammaproteobacteria</taxon>
        <taxon>Enterobacterales</taxon>
        <taxon>Enterobacteriaceae</taxon>
        <taxon>Shigella</taxon>
    </lineage>
</organism>